<sequence>MIASKESNSAATPATSAPTLRTTAEIAATAAMGHAPHETFTINLGPQHPAAHGVLRVLMRMDGEWVENAEPVIGYIHRMHEKMGENRTWAKFLPNTSRIDYLSAMHYTHAWVGVVERGLKIEVPERAEYIRVITSELNRIASHQVWWGALLLDLGGFTPILYAFDDREKILDLLEGLCGARLTYCYYRFGGLYNDADDDFLKGTREFVKYMRPRLKMYRDLVTDNVILRQRLTGIGPISADTCRKYGATGPVIRGSGVAYDVRRAEPYSVYPKLQFKIPTYPECDSMARYLVRMDEMEESLNIIEQCLDLIQPGPFMAPKVPRVIRLPAGDYTYAVEAARGRFMVRVVSDGKENPYRARLRTPSFGNLSLFEETSRGMLLPDALAMMGSLDLVIPDIDR</sequence>
<evidence type="ECO:0000255" key="1">
    <source>
        <dbReference type="HAMAP-Rule" id="MF_01358"/>
    </source>
</evidence>
<evidence type="ECO:0000256" key="2">
    <source>
        <dbReference type="SAM" id="MobiDB-lite"/>
    </source>
</evidence>
<reference key="1">
    <citation type="journal article" date="2011" name="J. Bacteriol.">
        <title>Genome sequence of the verrucomicrobium Opitutus terrae PB90-1, an abundant inhabitant of rice paddy soil ecosystems.</title>
        <authorList>
            <person name="van Passel M.W."/>
            <person name="Kant R."/>
            <person name="Palva A."/>
            <person name="Copeland A."/>
            <person name="Lucas S."/>
            <person name="Lapidus A."/>
            <person name="Glavina del Rio T."/>
            <person name="Pitluck S."/>
            <person name="Goltsman E."/>
            <person name="Clum A."/>
            <person name="Sun H."/>
            <person name="Schmutz J."/>
            <person name="Larimer F.W."/>
            <person name="Land M.L."/>
            <person name="Hauser L."/>
            <person name="Kyrpides N."/>
            <person name="Mikhailova N."/>
            <person name="Richardson P.P."/>
            <person name="Janssen P.H."/>
            <person name="de Vos W.M."/>
            <person name="Smidt H."/>
        </authorList>
    </citation>
    <scope>NUCLEOTIDE SEQUENCE [LARGE SCALE GENOMIC DNA]</scope>
    <source>
        <strain>DSM 11246 / JCM 15787 / PB90-1</strain>
    </source>
</reference>
<feature type="chain" id="PRO_0000357879" description="NADH-quinone oxidoreductase subunit D 2">
    <location>
        <begin position="1"/>
        <end position="399"/>
    </location>
</feature>
<feature type="region of interest" description="Disordered" evidence="2">
    <location>
        <begin position="1"/>
        <end position="20"/>
    </location>
</feature>
<feature type="compositionally biased region" description="Low complexity" evidence="2">
    <location>
        <begin position="9"/>
        <end position="20"/>
    </location>
</feature>
<gene>
    <name evidence="1" type="primary">nuoD2</name>
    <name type="ordered locus">Oter_0746</name>
</gene>
<name>NUOD2_OPITP</name>
<accession>B1ZUJ2</accession>
<comment type="function">
    <text evidence="1">NDH-1 shuttles electrons from NADH, via FMN and iron-sulfur (Fe-S) centers, to quinones in the respiratory chain. The immediate electron acceptor for the enzyme in this species is believed to be ubiquinone. Couples the redox reaction to proton translocation (for every two electrons transferred, four hydrogen ions are translocated across the cytoplasmic membrane), and thus conserves the redox energy in a proton gradient.</text>
</comment>
<comment type="catalytic activity">
    <reaction evidence="1">
        <text>a quinone + NADH + 5 H(+)(in) = a quinol + NAD(+) + 4 H(+)(out)</text>
        <dbReference type="Rhea" id="RHEA:57888"/>
        <dbReference type="ChEBI" id="CHEBI:15378"/>
        <dbReference type="ChEBI" id="CHEBI:24646"/>
        <dbReference type="ChEBI" id="CHEBI:57540"/>
        <dbReference type="ChEBI" id="CHEBI:57945"/>
        <dbReference type="ChEBI" id="CHEBI:132124"/>
    </reaction>
</comment>
<comment type="subunit">
    <text evidence="1">NDH-1 is composed of 14 different subunits. Subunits NuoB, C, D, E, F, and G constitute the peripheral sector of the complex.</text>
</comment>
<comment type="subcellular location">
    <subcellularLocation>
        <location evidence="1">Cell inner membrane</location>
        <topology evidence="1">Peripheral membrane protein</topology>
        <orientation evidence="1">Cytoplasmic side</orientation>
    </subcellularLocation>
</comment>
<comment type="similarity">
    <text evidence="1">Belongs to the complex I 49 kDa subunit family.</text>
</comment>
<proteinExistence type="inferred from homology"/>
<protein>
    <recommendedName>
        <fullName evidence="1">NADH-quinone oxidoreductase subunit D 2</fullName>
        <ecNumber evidence="1">7.1.1.-</ecNumber>
    </recommendedName>
    <alternativeName>
        <fullName evidence="1">NADH dehydrogenase I subunit D 2</fullName>
    </alternativeName>
    <alternativeName>
        <fullName evidence="1">NDH-1 subunit D 2</fullName>
    </alternativeName>
</protein>
<dbReference type="EC" id="7.1.1.-" evidence="1"/>
<dbReference type="EMBL" id="CP001032">
    <property type="protein sequence ID" value="ACB74035.1"/>
    <property type="molecule type" value="Genomic_DNA"/>
</dbReference>
<dbReference type="RefSeq" id="WP_012373573.1">
    <property type="nucleotide sequence ID" value="NC_010571.1"/>
</dbReference>
<dbReference type="SMR" id="B1ZUJ2"/>
<dbReference type="STRING" id="452637.Oter_0746"/>
<dbReference type="KEGG" id="ote:Oter_0746"/>
<dbReference type="eggNOG" id="COG0649">
    <property type="taxonomic scope" value="Bacteria"/>
</dbReference>
<dbReference type="HOGENOM" id="CLU_015134_1_2_0"/>
<dbReference type="OrthoDB" id="9801496at2"/>
<dbReference type="Proteomes" id="UP000007013">
    <property type="component" value="Chromosome"/>
</dbReference>
<dbReference type="GO" id="GO:0005886">
    <property type="term" value="C:plasma membrane"/>
    <property type="evidence" value="ECO:0007669"/>
    <property type="project" value="UniProtKB-SubCell"/>
</dbReference>
<dbReference type="GO" id="GO:0051287">
    <property type="term" value="F:NAD binding"/>
    <property type="evidence" value="ECO:0007669"/>
    <property type="project" value="InterPro"/>
</dbReference>
<dbReference type="GO" id="GO:0050136">
    <property type="term" value="F:NADH:ubiquinone reductase (non-electrogenic) activity"/>
    <property type="evidence" value="ECO:0007669"/>
    <property type="project" value="UniProtKB-UniRule"/>
</dbReference>
<dbReference type="GO" id="GO:0048038">
    <property type="term" value="F:quinone binding"/>
    <property type="evidence" value="ECO:0007669"/>
    <property type="project" value="UniProtKB-KW"/>
</dbReference>
<dbReference type="Gene3D" id="1.10.645.10">
    <property type="entry name" value="Cytochrome-c3 Hydrogenase, chain B"/>
    <property type="match status" value="1"/>
</dbReference>
<dbReference type="HAMAP" id="MF_01358">
    <property type="entry name" value="NDH1_NuoD"/>
    <property type="match status" value="1"/>
</dbReference>
<dbReference type="InterPro" id="IPR001135">
    <property type="entry name" value="NADH_Q_OxRdtase_suD"/>
</dbReference>
<dbReference type="InterPro" id="IPR022885">
    <property type="entry name" value="NDH1_su_D/H"/>
</dbReference>
<dbReference type="InterPro" id="IPR029014">
    <property type="entry name" value="NiFe-Hase_large"/>
</dbReference>
<dbReference type="PANTHER" id="PTHR11993:SF10">
    <property type="entry name" value="NADH DEHYDROGENASE [UBIQUINONE] IRON-SULFUR PROTEIN 2, MITOCHONDRIAL"/>
    <property type="match status" value="1"/>
</dbReference>
<dbReference type="PANTHER" id="PTHR11993">
    <property type="entry name" value="NADH-UBIQUINONE OXIDOREDUCTASE 49 KDA SUBUNIT"/>
    <property type="match status" value="1"/>
</dbReference>
<dbReference type="Pfam" id="PF00346">
    <property type="entry name" value="Complex1_49kDa"/>
    <property type="match status" value="2"/>
</dbReference>
<dbReference type="SUPFAM" id="SSF56762">
    <property type="entry name" value="HydB/Nqo4-like"/>
    <property type="match status" value="1"/>
</dbReference>
<keyword id="KW-0997">Cell inner membrane</keyword>
<keyword id="KW-1003">Cell membrane</keyword>
<keyword id="KW-0472">Membrane</keyword>
<keyword id="KW-0520">NAD</keyword>
<keyword id="KW-0874">Quinone</keyword>
<keyword id="KW-1185">Reference proteome</keyword>
<keyword id="KW-1278">Translocase</keyword>
<keyword id="KW-0813">Transport</keyword>
<keyword id="KW-0830">Ubiquinone</keyword>
<organism>
    <name type="scientific">Opitutus terrae (strain DSM 11246 / JCM 15787 / PB90-1)</name>
    <dbReference type="NCBI Taxonomy" id="452637"/>
    <lineage>
        <taxon>Bacteria</taxon>
        <taxon>Pseudomonadati</taxon>
        <taxon>Verrucomicrobiota</taxon>
        <taxon>Opitutia</taxon>
        <taxon>Opitutales</taxon>
        <taxon>Opitutaceae</taxon>
        <taxon>Opitutus</taxon>
    </lineage>
</organism>